<reference key="1">
    <citation type="journal article" date="2001" name="Biochem. Biophys. Res. Commun.">
        <title>Characterization of the mouse Cblc/Cbl3 gene.</title>
        <authorList>
            <person name="Fiore F."/>
            <person name="Ollendorff V."/>
            <person name="Birnbaum D."/>
        </authorList>
    </citation>
    <scope>NUCLEOTIDE SEQUENCE [MRNA] (ISOFORM 1)</scope>
    <scope>TISSUE SPECIFICITY</scope>
    <scope>DEVELOPMENTAL STAGE</scope>
    <source>
        <strain>C57BL/6J</strain>
    </source>
</reference>
<reference key="2">
    <citation type="journal article" date="2005" name="Science">
        <title>The transcriptional landscape of the mammalian genome.</title>
        <authorList>
            <person name="Carninci P."/>
            <person name="Kasukawa T."/>
            <person name="Katayama S."/>
            <person name="Gough J."/>
            <person name="Frith M.C."/>
            <person name="Maeda N."/>
            <person name="Oyama R."/>
            <person name="Ravasi T."/>
            <person name="Lenhard B."/>
            <person name="Wells C."/>
            <person name="Kodzius R."/>
            <person name="Shimokawa K."/>
            <person name="Bajic V.B."/>
            <person name="Brenner S.E."/>
            <person name="Batalov S."/>
            <person name="Forrest A.R."/>
            <person name="Zavolan M."/>
            <person name="Davis M.J."/>
            <person name="Wilming L.G."/>
            <person name="Aidinis V."/>
            <person name="Allen J.E."/>
            <person name="Ambesi-Impiombato A."/>
            <person name="Apweiler R."/>
            <person name="Aturaliya R.N."/>
            <person name="Bailey T.L."/>
            <person name="Bansal M."/>
            <person name="Baxter L."/>
            <person name="Beisel K.W."/>
            <person name="Bersano T."/>
            <person name="Bono H."/>
            <person name="Chalk A.M."/>
            <person name="Chiu K.P."/>
            <person name="Choudhary V."/>
            <person name="Christoffels A."/>
            <person name="Clutterbuck D.R."/>
            <person name="Crowe M.L."/>
            <person name="Dalla E."/>
            <person name="Dalrymple B.P."/>
            <person name="de Bono B."/>
            <person name="Della Gatta G."/>
            <person name="di Bernardo D."/>
            <person name="Down T."/>
            <person name="Engstrom P."/>
            <person name="Fagiolini M."/>
            <person name="Faulkner G."/>
            <person name="Fletcher C.F."/>
            <person name="Fukushima T."/>
            <person name="Furuno M."/>
            <person name="Futaki S."/>
            <person name="Gariboldi M."/>
            <person name="Georgii-Hemming P."/>
            <person name="Gingeras T.R."/>
            <person name="Gojobori T."/>
            <person name="Green R.E."/>
            <person name="Gustincich S."/>
            <person name="Harbers M."/>
            <person name="Hayashi Y."/>
            <person name="Hensch T.K."/>
            <person name="Hirokawa N."/>
            <person name="Hill D."/>
            <person name="Huminiecki L."/>
            <person name="Iacono M."/>
            <person name="Ikeo K."/>
            <person name="Iwama A."/>
            <person name="Ishikawa T."/>
            <person name="Jakt M."/>
            <person name="Kanapin A."/>
            <person name="Katoh M."/>
            <person name="Kawasawa Y."/>
            <person name="Kelso J."/>
            <person name="Kitamura H."/>
            <person name="Kitano H."/>
            <person name="Kollias G."/>
            <person name="Krishnan S.P."/>
            <person name="Kruger A."/>
            <person name="Kummerfeld S.K."/>
            <person name="Kurochkin I.V."/>
            <person name="Lareau L.F."/>
            <person name="Lazarevic D."/>
            <person name="Lipovich L."/>
            <person name="Liu J."/>
            <person name="Liuni S."/>
            <person name="McWilliam S."/>
            <person name="Madan Babu M."/>
            <person name="Madera M."/>
            <person name="Marchionni L."/>
            <person name="Matsuda H."/>
            <person name="Matsuzawa S."/>
            <person name="Miki H."/>
            <person name="Mignone F."/>
            <person name="Miyake S."/>
            <person name="Morris K."/>
            <person name="Mottagui-Tabar S."/>
            <person name="Mulder N."/>
            <person name="Nakano N."/>
            <person name="Nakauchi H."/>
            <person name="Ng P."/>
            <person name="Nilsson R."/>
            <person name="Nishiguchi S."/>
            <person name="Nishikawa S."/>
            <person name="Nori F."/>
            <person name="Ohara O."/>
            <person name="Okazaki Y."/>
            <person name="Orlando V."/>
            <person name="Pang K.C."/>
            <person name="Pavan W.J."/>
            <person name="Pavesi G."/>
            <person name="Pesole G."/>
            <person name="Petrovsky N."/>
            <person name="Piazza S."/>
            <person name="Reed J."/>
            <person name="Reid J.F."/>
            <person name="Ring B.Z."/>
            <person name="Ringwald M."/>
            <person name="Rost B."/>
            <person name="Ruan Y."/>
            <person name="Salzberg S.L."/>
            <person name="Sandelin A."/>
            <person name="Schneider C."/>
            <person name="Schoenbach C."/>
            <person name="Sekiguchi K."/>
            <person name="Semple C.A."/>
            <person name="Seno S."/>
            <person name="Sessa L."/>
            <person name="Sheng Y."/>
            <person name="Shibata Y."/>
            <person name="Shimada H."/>
            <person name="Shimada K."/>
            <person name="Silva D."/>
            <person name="Sinclair B."/>
            <person name="Sperling S."/>
            <person name="Stupka E."/>
            <person name="Sugiura K."/>
            <person name="Sultana R."/>
            <person name="Takenaka Y."/>
            <person name="Taki K."/>
            <person name="Tammoja K."/>
            <person name="Tan S.L."/>
            <person name="Tang S."/>
            <person name="Taylor M.S."/>
            <person name="Tegner J."/>
            <person name="Teichmann S.A."/>
            <person name="Ueda H.R."/>
            <person name="van Nimwegen E."/>
            <person name="Verardo R."/>
            <person name="Wei C.L."/>
            <person name="Yagi K."/>
            <person name="Yamanishi H."/>
            <person name="Zabarovsky E."/>
            <person name="Zhu S."/>
            <person name="Zimmer A."/>
            <person name="Hide W."/>
            <person name="Bult C."/>
            <person name="Grimmond S.M."/>
            <person name="Teasdale R.D."/>
            <person name="Liu E.T."/>
            <person name="Brusic V."/>
            <person name="Quackenbush J."/>
            <person name="Wahlestedt C."/>
            <person name="Mattick J.S."/>
            <person name="Hume D.A."/>
            <person name="Kai C."/>
            <person name="Sasaki D."/>
            <person name="Tomaru Y."/>
            <person name="Fukuda S."/>
            <person name="Kanamori-Katayama M."/>
            <person name="Suzuki M."/>
            <person name="Aoki J."/>
            <person name="Arakawa T."/>
            <person name="Iida J."/>
            <person name="Imamura K."/>
            <person name="Itoh M."/>
            <person name="Kato T."/>
            <person name="Kawaji H."/>
            <person name="Kawagashira N."/>
            <person name="Kawashima T."/>
            <person name="Kojima M."/>
            <person name="Kondo S."/>
            <person name="Konno H."/>
            <person name="Nakano K."/>
            <person name="Ninomiya N."/>
            <person name="Nishio T."/>
            <person name="Okada M."/>
            <person name="Plessy C."/>
            <person name="Shibata K."/>
            <person name="Shiraki T."/>
            <person name="Suzuki S."/>
            <person name="Tagami M."/>
            <person name="Waki K."/>
            <person name="Watahiki A."/>
            <person name="Okamura-Oho Y."/>
            <person name="Suzuki H."/>
            <person name="Kawai J."/>
            <person name="Hayashizaki Y."/>
        </authorList>
    </citation>
    <scope>NUCLEOTIDE SEQUENCE [LARGE SCALE MRNA] (ISOFORMS 1 AND 2)</scope>
    <source>
        <strain>C57BL/6J</strain>
        <tissue>Tongue</tissue>
    </source>
</reference>
<reference key="3">
    <citation type="journal article" date="2004" name="Genome Res.">
        <title>The status, quality, and expansion of the NIH full-length cDNA project: the Mammalian Gene Collection (MGC).</title>
        <authorList>
            <consortium name="The MGC Project Team"/>
        </authorList>
    </citation>
    <scope>NUCLEOTIDE SEQUENCE [LARGE SCALE MRNA] (ISOFORM 1)</scope>
    <source>
        <strain>FVB/N</strain>
        <tissue>Colon</tissue>
    </source>
</reference>
<reference key="4">
    <citation type="journal article" date="2003" name="Mol. Cell. Biol.">
        <title>Cbl-3-deficient mice exhibit normal epithelial development.</title>
        <authorList>
            <person name="Griffiths E.K."/>
            <person name="Sanchez O."/>
            <person name="Mill P."/>
            <person name="Krawczyk C."/>
            <person name="Hojilla C.V."/>
            <person name="Rubin E."/>
            <person name="Nau M.M."/>
            <person name="Khokha R."/>
            <person name="Lipkowitz S."/>
            <person name="Hui C.C."/>
            <person name="Penninger J.M."/>
        </authorList>
    </citation>
    <scope>DISRUPTION PHENOTYPE</scope>
    <scope>TISSUE SPECIFICITY</scope>
</reference>
<sequence>MAAAAAPRGWQRGEPRALSRAVKLLQRLEEQCRDPRMVTGPPSLRDLLPRTAQLLGEVAKARREAREDPEGPGGADDFLAIYLANLEVKGRQVAELLPPRGKKDVNQDVFREGSRFRRQLAKLALIFSHMHAELSALFPAGKYCGHLYQLTKGSAHIFWRQNCGVRCVLPWAEFQSLLCACHPVEPGPTMQALRSTLDLTCNGHVSVFEFDVFTRLFQPWPTLLRNWQLLAVNHPGYMAFLTYDEVQTRLQAYRDKPGSYIFRPSCTRLGQWAIGYVSSDGSILQTIPLNKPLLQVLLKGQKDGIFLFPDGKKHNPDLTELCRVEPYQRIQVSEEQLLLYQAMNSTFQLCKICAERDKDVRIEPCGHLLCSCCLAAWQDSDSQTCPFCRCEIKGREAVSICQAQERPTEVRTAADGSRDNCHQEAAEQKLGPVIPSAPSLLPEDQFPQGPQDKGWLTLAPLALPRLRPPLPLPKMASVLWEVTSRPRAREEATESS</sequence>
<organism>
    <name type="scientific">Mus musculus</name>
    <name type="common">Mouse</name>
    <dbReference type="NCBI Taxonomy" id="10090"/>
    <lineage>
        <taxon>Eukaryota</taxon>
        <taxon>Metazoa</taxon>
        <taxon>Chordata</taxon>
        <taxon>Craniata</taxon>
        <taxon>Vertebrata</taxon>
        <taxon>Euteleostomi</taxon>
        <taxon>Mammalia</taxon>
        <taxon>Eutheria</taxon>
        <taxon>Euarchontoglires</taxon>
        <taxon>Glires</taxon>
        <taxon>Rodentia</taxon>
        <taxon>Myomorpha</taxon>
        <taxon>Muroidea</taxon>
        <taxon>Muridae</taxon>
        <taxon>Murinae</taxon>
        <taxon>Mus</taxon>
        <taxon>Mus</taxon>
    </lineage>
</organism>
<feature type="chain" id="PRO_0000055867" description="E3 ubiquitin-protein ligase CBL-C">
    <location>
        <begin position="1"/>
        <end position="496"/>
    </location>
</feature>
<feature type="domain" description="Cbl-PTB" evidence="5">
    <location>
        <begin position="7"/>
        <end position="320"/>
    </location>
</feature>
<feature type="zinc finger region" description="RING-type" evidence="4">
    <location>
        <begin position="350"/>
        <end position="389"/>
    </location>
</feature>
<feature type="region of interest" description="4H">
    <location>
        <begin position="7"/>
        <end position="144"/>
    </location>
</feature>
<feature type="region of interest" description="EF-hand-like">
    <location>
        <begin position="145"/>
        <end position="217"/>
    </location>
</feature>
<feature type="region of interest" description="SH2-like">
    <location>
        <begin position="218"/>
        <end position="320"/>
    </location>
</feature>
<feature type="region of interest" description="Linker" evidence="1">
    <location>
        <begin position="321"/>
        <end position="349"/>
    </location>
</feature>
<feature type="region of interest" description="Interaction with RET" evidence="1">
    <location>
        <begin position="350"/>
        <end position="494"/>
    </location>
</feature>
<feature type="region of interest" description="Disordered" evidence="6">
    <location>
        <begin position="432"/>
        <end position="453"/>
    </location>
</feature>
<feature type="binding site" evidence="2">
    <location>
        <position position="198"/>
    </location>
    <ligand>
        <name>Ca(2+)</name>
        <dbReference type="ChEBI" id="CHEBI:29108"/>
    </ligand>
</feature>
<feature type="binding site" evidence="2">
    <location>
        <position position="200"/>
    </location>
    <ligand>
        <name>Ca(2+)</name>
        <dbReference type="ChEBI" id="CHEBI:29108"/>
    </ligand>
</feature>
<feature type="binding site" evidence="2">
    <location>
        <position position="202"/>
    </location>
    <ligand>
        <name>Ca(2+)</name>
        <dbReference type="ChEBI" id="CHEBI:29108"/>
    </ligand>
</feature>
<feature type="binding site" evidence="2">
    <location>
        <position position="209"/>
    </location>
    <ligand>
        <name>Ca(2+)</name>
        <dbReference type="ChEBI" id="CHEBI:29108"/>
    </ligand>
</feature>
<feature type="binding site" evidence="1">
    <location>
        <position position="263"/>
    </location>
    <ligand>
        <name>4-O-phospho-L-tyrosine</name>
        <dbReference type="ChEBI" id="CHEBI:62338"/>
    </ligand>
</feature>
<feature type="modified residue" description="Phosphotyrosine; by SRC" evidence="3">
    <location>
        <position position="340"/>
    </location>
</feature>
<feature type="splice variant" id="VSP_014946" description="In isoform 2." evidence="9">
    <original>S</original>
    <variation>R</variation>
    <location>
        <position position="259"/>
    </location>
</feature>
<feature type="splice variant" id="VSP_014947" description="In isoform 2." evidence="9">
    <location>
        <begin position="260"/>
        <end position="496"/>
    </location>
</feature>
<feature type="sequence conflict" description="In Ref. 1; AAK01405." evidence="10" ref="1">
    <original>R</original>
    <variation>Q</variation>
    <location>
        <position position="8"/>
    </location>
</feature>
<feature type="sequence conflict" description="In Ref. 1; AAK01405." evidence="10" ref="1">
    <original>S</original>
    <variation>G</variation>
    <location>
        <position position="371"/>
    </location>
</feature>
<feature type="sequence conflict" description="In Ref. 2; BAB26782." evidence="10" ref="2">
    <original>A</original>
    <variation>S</variation>
    <location>
        <position position="375"/>
    </location>
</feature>
<feature type="sequence conflict" description="In Ref. 3; AAH46337." evidence="10" ref="3">
    <original>G</original>
    <variation>D</variation>
    <location>
        <position position="416"/>
    </location>
</feature>
<evidence type="ECO:0000250" key="1"/>
<evidence type="ECO:0000250" key="2">
    <source>
        <dbReference type="UniProtKB" id="P22681"/>
    </source>
</evidence>
<evidence type="ECO:0000250" key="3">
    <source>
        <dbReference type="UniProtKB" id="Q9ULV8"/>
    </source>
</evidence>
<evidence type="ECO:0000255" key="4">
    <source>
        <dbReference type="PROSITE-ProRule" id="PRU00175"/>
    </source>
</evidence>
<evidence type="ECO:0000255" key="5">
    <source>
        <dbReference type="PROSITE-ProRule" id="PRU00839"/>
    </source>
</evidence>
<evidence type="ECO:0000256" key="6">
    <source>
        <dbReference type="SAM" id="MobiDB-lite"/>
    </source>
</evidence>
<evidence type="ECO:0000269" key="7">
    <source>
    </source>
</evidence>
<evidence type="ECO:0000269" key="8">
    <source>
    </source>
</evidence>
<evidence type="ECO:0000303" key="9">
    <source>
    </source>
</evidence>
<evidence type="ECO:0000305" key="10"/>
<proteinExistence type="evidence at protein level"/>
<keyword id="KW-0025">Alternative splicing</keyword>
<keyword id="KW-0106">Calcium</keyword>
<keyword id="KW-0479">Metal-binding</keyword>
<keyword id="KW-0597">Phosphoprotein</keyword>
<keyword id="KW-1185">Reference proteome</keyword>
<keyword id="KW-0677">Repeat</keyword>
<keyword id="KW-0729">SH3-binding</keyword>
<keyword id="KW-0808">Transferase</keyword>
<keyword id="KW-0832">Ubl conjugation</keyword>
<keyword id="KW-0833">Ubl conjugation pathway</keyword>
<keyword id="KW-0862">Zinc</keyword>
<keyword id="KW-0863">Zinc-finger</keyword>
<gene>
    <name type="primary">Cblc</name>
    <name type="synonym">Cbl3</name>
</gene>
<name>CBLC_MOUSE</name>
<comment type="function">
    <text evidence="3">Acts as an E3 ubiquitin-protein ligase, which accepts ubiquitin from specific E2 ubiquitin-conjugating enzymes, and then transfers it to substrates promoting their degradation by the proteasome. Functionally coupled with the E2 ubiquitin-protein ligases UB2D1, UB2D2 and UB2D3. Regulator of EGFR mediated signal transduction; upon EGF activation, ubiquitinates EGFR. Isoform 1, but not isoform 2, inhibits EGF stimulated MAPK1 activation. Promotes ubiquitination of SRC phosphorylated at 'Tyr-424', has the highest ubiquitin ligase activity among CBL family proteins. In collaboration with CD2AP may act as regulatory checkpoint for Ret signaling by modulating the rate of RET degradation after ligand activation; CD2AP converts it from an inhibitor to a promoter of RET degradation; the function limits the potency of GDNF on neuronal survival.</text>
</comment>
<comment type="catalytic activity">
    <reaction evidence="3">
        <text>S-ubiquitinyl-[E2 ubiquitin-conjugating enzyme]-L-cysteine + [acceptor protein]-L-lysine = [E2 ubiquitin-conjugating enzyme]-L-cysteine + N(6)-ubiquitinyl-[acceptor protein]-L-lysine.</text>
        <dbReference type="EC" id="2.3.2.27"/>
    </reaction>
</comment>
<comment type="activity regulation">
    <text evidence="3">Phosphorylation at Tyr-340 is necessary and sufficient for the activation of E3 activity.</text>
</comment>
<comment type="subunit">
    <text evidence="3">Interacts with Ubiquitin-conjugating enzyme E2 UBE2D2 and UBE2D3. Isoform 1 interacts with EGFR (tyrosine phosphorylated). Interacts with the SH3 domain proteins LYN and CRK. Interacts (via RING-type zinc finger) with TGFB1I1 (via LIM zinc-binding domain 2); the interaction is direct and enhances the E3 activity. Interacts directly with RET (inactive) and CD2AP; dissociates from RET upon RET activation by GDNF which also increases the interaction with CD2AP suggesting dissociation as CBLC:CD2AP complex. Interacts with SRC; the interaction is enhanced when SRC is phosphorylated at 'Tyr-419'.</text>
</comment>
<comment type="alternative products">
    <event type="alternative splicing"/>
    <isoform>
        <id>Q80XL1-1</id>
        <name>1</name>
        <sequence type="displayed"/>
    </isoform>
    <isoform>
        <id>Q80XL1-2</id>
        <name>2</name>
        <sequence type="described" ref="VSP_014946 VSP_014947"/>
    </isoform>
</comment>
<comment type="tissue specificity">
    <text evidence="7 8">Widely expressed in tissues, where the expression is restricted to epithelial cells (at protein level).</text>
</comment>
<comment type="developmental stage">
    <text evidence="7">Expressed at 14.5 dpc in liver, lung and brain.</text>
</comment>
<comment type="domain">
    <text evidence="3">EF-hand-like and Sh2-like domains are required for N-terminal inhibition of E3 activity.</text>
</comment>
<comment type="domain">
    <text evidence="5">The N-terminus is composed of the phosphotyrosine binding (PTB) domain, a short linker region and the RING-type zinc finger. The PTB domain, which is also called TKB (tyrosine kinase binding) domain, is composed of three different subdomains: a four-helix bundle (4H), a calcium-binding EF hand and a divergent SH2 domain.</text>
</comment>
<comment type="domain">
    <text evidence="1">The RING-type zinc finger domain mediates binding to an E2 ubiquitin-conjugating enzyme.</text>
</comment>
<comment type="PTM">
    <text evidence="1">Phosphorylated on tyrosines by EGFR.</text>
</comment>
<comment type="PTM">
    <text evidence="3">Phosphorylated on multiple tyrosine residues by SRC. Isoform 1, but not isoform 2, is phosphorylated on tyrosines by EGFR.</text>
</comment>
<comment type="PTM">
    <text evidence="3">Autoubiquitinated, when phosphorylated at Tyr-340.</text>
</comment>
<comment type="disruption phenotype">
    <text evidence="8">No visible phenotype.</text>
</comment>
<comment type="miscellaneous">
    <text evidence="1">This protein has one functional calcium-binding site.</text>
</comment>
<dbReference type="EC" id="2.3.2.27" evidence="3"/>
<dbReference type="EMBL" id="AF319956">
    <property type="protein sequence ID" value="AAK01405.1"/>
    <property type="molecule type" value="mRNA"/>
</dbReference>
<dbReference type="EMBL" id="AK009399">
    <property type="protein sequence ID" value="BAB26265.1"/>
    <property type="molecule type" value="mRNA"/>
</dbReference>
<dbReference type="EMBL" id="AK010228">
    <property type="protein sequence ID" value="BAB26782.1"/>
    <property type="molecule type" value="mRNA"/>
</dbReference>
<dbReference type="EMBL" id="BC046337">
    <property type="protein sequence ID" value="AAH46337.1"/>
    <property type="molecule type" value="mRNA"/>
</dbReference>
<dbReference type="CCDS" id="CCDS39804.1">
    <molecule id="Q80XL1-1"/>
</dbReference>
<dbReference type="RefSeq" id="NP_075713.3">
    <molecule id="Q80XL1-1"/>
    <property type="nucleotide sequence ID" value="NM_023224.5"/>
</dbReference>
<dbReference type="SMR" id="Q80XL1"/>
<dbReference type="BioGRID" id="219812">
    <property type="interactions" value="2"/>
</dbReference>
<dbReference type="FunCoup" id="Q80XL1">
    <property type="interactions" value="390"/>
</dbReference>
<dbReference type="STRING" id="10090.ENSMUSP00000039955"/>
<dbReference type="GlyGen" id="Q80XL1">
    <property type="glycosylation" value="1 site"/>
</dbReference>
<dbReference type="PhosphoSitePlus" id="Q80XL1"/>
<dbReference type="PaxDb" id="10090-ENSMUSP00000039955"/>
<dbReference type="Antibodypedia" id="3762">
    <property type="antibodies" value="390 antibodies from 31 providers"/>
</dbReference>
<dbReference type="DNASU" id="80794"/>
<dbReference type="Ensembl" id="ENSMUST00000043822.8">
    <molecule id="Q80XL1-1"/>
    <property type="protein sequence ID" value="ENSMUSP00000039955.8"/>
    <property type="gene ID" value="ENSMUSG00000040525.14"/>
</dbReference>
<dbReference type="GeneID" id="80794"/>
<dbReference type="KEGG" id="mmu:80794"/>
<dbReference type="UCSC" id="uc009fnh.2">
    <molecule id="Q80XL1-1"/>
    <property type="organism name" value="mouse"/>
</dbReference>
<dbReference type="UCSC" id="uc009fni.2">
    <molecule id="Q80XL1-2"/>
    <property type="organism name" value="mouse"/>
</dbReference>
<dbReference type="AGR" id="MGI:1931457"/>
<dbReference type="CTD" id="23624"/>
<dbReference type="MGI" id="MGI:1931457">
    <property type="gene designation" value="Cblc"/>
</dbReference>
<dbReference type="VEuPathDB" id="HostDB:ENSMUSG00000040525"/>
<dbReference type="eggNOG" id="KOG1785">
    <property type="taxonomic scope" value="Eukaryota"/>
</dbReference>
<dbReference type="GeneTree" id="ENSGT00940000162336"/>
<dbReference type="HOGENOM" id="CLU_013535_2_0_1"/>
<dbReference type="InParanoid" id="Q80XL1"/>
<dbReference type="OMA" id="NIRLEPC"/>
<dbReference type="OrthoDB" id="7237699at2759"/>
<dbReference type="PhylomeDB" id="Q80XL1"/>
<dbReference type="TreeFam" id="TF314210"/>
<dbReference type="BioGRID-ORCS" id="80794">
    <property type="hits" value="5 hits in 81 CRISPR screens"/>
</dbReference>
<dbReference type="ChiTaRS" id="Cblc">
    <property type="organism name" value="mouse"/>
</dbReference>
<dbReference type="PRO" id="PR:Q80XL1"/>
<dbReference type="Proteomes" id="UP000000589">
    <property type="component" value="Chromosome 7"/>
</dbReference>
<dbReference type="RNAct" id="Q80XL1">
    <property type="molecule type" value="protein"/>
</dbReference>
<dbReference type="Bgee" id="ENSMUSG00000040525">
    <property type="expression patterns" value="Expressed in duodenum and 122 other cell types or tissues"/>
</dbReference>
<dbReference type="ExpressionAtlas" id="Q80XL1">
    <property type="expression patterns" value="baseline and differential"/>
</dbReference>
<dbReference type="GO" id="GO:0000151">
    <property type="term" value="C:ubiquitin ligase complex"/>
    <property type="evidence" value="ECO:0000266"/>
    <property type="project" value="MGI"/>
</dbReference>
<dbReference type="GO" id="GO:0005509">
    <property type="term" value="F:calcium ion binding"/>
    <property type="evidence" value="ECO:0007669"/>
    <property type="project" value="InterPro"/>
</dbReference>
<dbReference type="GO" id="GO:0005154">
    <property type="term" value="F:epidermal growth factor receptor binding"/>
    <property type="evidence" value="ECO:0007669"/>
    <property type="project" value="Ensembl"/>
</dbReference>
<dbReference type="GO" id="GO:0001784">
    <property type="term" value="F:phosphotyrosine residue binding"/>
    <property type="evidence" value="ECO:0007669"/>
    <property type="project" value="Ensembl"/>
</dbReference>
<dbReference type="GO" id="GO:0017124">
    <property type="term" value="F:SH3 domain binding"/>
    <property type="evidence" value="ECO:0007669"/>
    <property type="project" value="UniProtKB-KW"/>
</dbReference>
<dbReference type="GO" id="GO:0061630">
    <property type="term" value="F:ubiquitin protein ligase activity"/>
    <property type="evidence" value="ECO:0000266"/>
    <property type="project" value="MGI"/>
</dbReference>
<dbReference type="GO" id="GO:0008270">
    <property type="term" value="F:zinc ion binding"/>
    <property type="evidence" value="ECO:0007669"/>
    <property type="project" value="UniProtKB-KW"/>
</dbReference>
<dbReference type="GO" id="GO:0007166">
    <property type="term" value="P:cell surface receptor signaling pathway"/>
    <property type="evidence" value="ECO:0007669"/>
    <property type="project" value="InterPro"/>
</dbReference>
<dbReference type="GO" id="GO:0042059">
    <property type="term" value="P:negative regulation of epidermal growth factor receptor signaling pathway"/>
    <property type="evidence" value="ECO:0007669"/>
    <property type="project" value="Ensembl"/>
</dbReference>
<dbReference type="GO" id="GO:0043409">
    <property type="term" value="P:negative regulation of MAPK cascade"/>
    <property type="evidence" value="ECO:0007669"/>
    <property type="project" value="Ensembl"/>
</dbReference>
<dbReference type="GO" id="GO:0043524">
    <property type="term" value="P:negative regulation of neuron apoptotic process"/>
    <property type="evidence" value="ECO:0000314"/>
    <property type="project" value="MGI"/>
</dbReference>
<dbReference type="GO" id="GO:0030163">
    <property type="term" value="P:protein catabolic process"/>
    <property type="evidence" value="ECO:0000314"/>
    <property type="project" value="MGI"/>
</dbReference>
<dbReference type="GO" id="GO:0050821">
    <property type="term" value="P:protein stabilization"/>
    <property type="evidence" value="ECO:0000314"/>
    <property type="project" value="MGI"/>
</dbReference>
<dbReference type="GO" id="GO:0016567">
    <property type="term" value="P:protein ubiquitination"/>
    <property type="evidence" value="ECO:0007669"/>
    <property type="project" value="Ensembl"/>
</dbReference>
<dbReference type="GO" id="GO:1990790">
    <property type="term" value="P:response to glial cell derived neurotrophic factor"/>
    <property type="evidence" value="ECO:0000314"/>
    <property type="project" value="MGI"/>
</dbReference>
<dbReference type="GO" id="GO:0006511">
    <property type="term" value="P:ubiquitin-dependent protein catabolic process"/>
    <property type="evidence" value="ECO:0000266"/>
    <property type="project" value="MGI"/>
</dbReference>
<dbReference type="CDD" id="cd16710">
    <property type="entry name" value="RING-HC_Cbl-c"/>
    <property type="match status" value="1"/>
</dbReference>
<dbReference type="CDD" id="cd09920">
    <property type="entry name" value="SH2_Cbl-b_TKB"/>
    <property type="match status" value="1"/>
</dbReference>
<dbReference type="FunFam" id="3.30.40.10:FF:000367">
    <property type="entry name" value="Cbl proto-oncogene C"/>
    <property type="match status" value="1"/>
</dbReference>
<dbReference type="FunFam" id="3.30.505.10:FF:000007">
    <property type="entry name" value="E3 ubiquitin-protein ligase CBL"/>
    <property type="match status" value="1"/>
</dbReference>
<dbReference type="FunFam" id="1.10.238.10:FF:000182">
    <property type="entry name" value="E3 ubiquitin-protein ligase CBL-C"/>
    <property type="match status" value="1"/>
</dbReference>
<dbReference type="Gene3D" id="1.20.930.20">
    <property type="entry name" value="Adaptor protein Cbl, N-terminal domain"/>
    <property type="match status" value="1"/>
</dbReference>
<dbReference type="Gene3D" id="1.10.238.10">
    <property type="entry name" value="EF-hand"/>
    <property type="match status" value="1"/>
</dbReference>
<dbReference type="Gene3D" id="3.30.505.10">
    <property type="entry name" value="SH2 domain"/>
    <property type="match status" value="1"/>
</dbReference>
<dbReference type="Gene3D" id="3.30.40.10">
    <property type="entry name" value="Zinc/RING finger domain, C3HC4 (zinc finger)"/>
    <property type="match status" value="1"/>
</dbReference>
<dbReference type="InterPro" id="IPR024162">
    <property type="entry name" value="Adaptor_Cbl"/>
</dbReference>
<dbReference type="InterPro" id="IPR014741">
    <property type="entry name" value="Adaptor_Cbl_EF_hand-like"/>
</dbReference>
<dbReference type="InterPro" id="IPR036537">
    <property type="entry name" value="Adaptor_Cbl_N_dom_sf"/>
</dbReference>
<dbReference type="InterPro" id="IPR003153">
    <property type="entry name" value="Adaptor_Cbl_N_hlx"/>
</dbReference>
<dbReference type="InterPro" id="IPR014742">
    <property type="entry name" value="Adaptor_Cbl_SH2-like"/>
</dbReference>
<dbReference type="InterPro" id="IPR024159">
    <property type="entry name" value="Cbl_PTB"/>
</dbReference>
<dbReference type="InterPro" id="IPR011992">
    <property type="entry name" value="EF-hand-dom_pair"/>
</dbReference>
<dbReference type="InterPro" id="IPR036860">
    <property type="entry name" value="SH2_dom_sf"/>
</dbReference>
<dbReference type="InterPro" id="IPR001841">
    <property type="entry name" value="Znf_RING"/>
</dbReference>
<dbReference type="InterPro" id="IPR013083">
    <property type="entry name" value="Znf_RING/FYVE/PHD"/>
</dbReference>
<dbReference type="InterPro" id="IPR017907">
    <property type="entry name" value="Znf_RING_CS"/>
</dbReference>
<dbReference type="PANTHER" id="PTHR23007">
    <property type="entry name" value="CBL"/>
    <property type="match status" value="1"/>
</dbReference>
<dbReference type="PANTHER" id="PTHR23007:SF12">
    <property type="entry name" value="E3 UBIQUITIN-PROTEIN LIGASE CBL-C"/>
    <property type="match status" value="1"/>
</dbReference>
<dbReference type="Pfam" id="PF02262">
    <property type="entry name" value="Cbl_N"/>
    <property type="match status" value="1"/>
</dbReference>
<dbReference type="Pfam" id="PF02761">
    <property type="entry name" value="Cbl_N2"/>
    <property type="match status" value="1"/>
</dbReference>
<dbReference type="Pfam" id="PF02762">
    <property type="entry name" value="Cbl_N3"/>
    <property type="match status" value="1"/>
</dbReference>
<dbReference type="Pfam" id="PF13920">
    <property type="entry name" value="zf-C3HC4_3"/>
    <property type="match status" value="1"/>
</dbReference>
<dbReference type="SMART" id="SM00184">
    <property type="entry name" value="RING"/>
    <property type="match status" value="1"/>
</dbReference>
<dbReference type="SUPFAM" id="SSF47473">
    <property type="entry name" value="EF-hand"/>
    <property type="match status" value="1"/>
</dbReference>
<dbReference type="SUPFAM" id="SSF47668">
    <property type="entry name" value="N-terminal domain of cbl (N-cbl)"/>
    <property type="match status" value="1"/>
</dbReference>
<dbReference type="SUPFAM" id="SSF57850">
    <property type="entry name" value="RING/U-box"/>
    <property type="match status" value="1"/>
</dbReference>
<dbReference type="SUPFAM" id="SSF55550">
    <property type="entry name" value="SH2 domain"/>
    <property type="match status" value="1"/>
</dbReference>
<dbReference type="PROSITE" id="PS51506">
    <property type="entry name" value="CBL_PTB"/>
    <property type="match status" value="1"/>
</dbReference>
<dbReference type="PROSITE" id="PS00518">
    <property type="entry name" value="ZF_RING_1"/>
    <property type="match status" value="1"/>
</dbReference>
<dbReference type="PROSITE" id="PS50089">
    <property type="entry name" value="ZF_RING_2"/>
    <property type="match status" value="1"/>
</dbReference>
<accession>Q80XL1</accession>
<accession>Q99PB6</accession>
<accession>Q9D6L2</accession>
<accession>Q9D7A9</accession>
<protein>
    <recommendedName>
        <fullName>E3 ubiquitin-protein ligase CBL-C</fullName>
        <ecNumber evidence="3">2.3.2.27</ecNumber>
    </recommendedName>
    <alternativeName>
        <fullName evidence="10">RING-type E3 ubiquitin transferase CBL-C</fullName>
    </alternativeName>
    <alternativeName>
        <fullName>SH3-binding protein CBL-3</fullName>
    </alternativeName>
    <alternativeName>
        <fullName>SH3-binding protein CBL-C</fullName>
    </alternativeName>
    <alternativeName>
        <fullName>Signal transduction protein CBL-C</fullName>
    </alternativeName>
</protein>